<sequence length="209" mass="23485">MGNGMNKILTGLFLGNFKDARDVEQLHKNNITHILSIHDSARPMLEGMKYLCIPASDSPSQNLIQHFKDSIAFIHECRLKGEGCLVHCLAGVSRSVTLVVAYVMTVTDFGWEDSLSAVRGARTCANPNMGFQKQLEDFGKCEVHHFRTWLKDTYGESTFHDKDEAKQLLDKHKQQEAAESQNATSSGRQWNSHLTSLSSRSYSNYTTET</sequence>
<keyword id="KW-0963">Cytoplasm</keyword>
<keyword id="KW-0378">Hydrolase</keyword>
<keyword id="KW-0539">Nucleus</keyword>
<keyword id="KW-0904">Protein phosphatase</keyword>
<keyword id="KW-1185">Reference proteome</keyword>
<evidence type="ECO:0000250" key="1"/>
<evidence type="ECO:0000255" key="2">
    <source>
        <dbReference type="PROSITE-ProRule" id="PRU00160"/>
    </source>
</evidence>
<evidence type="ECO:0000256" key="3">
    <source>
        <dbReference type="SAM" id="MobiDB-lite"/>
    </source>
</evidence>
<evidence type="ECO:0000305" key="4"/>
<gene>
    <name type="primary">dusp22</name>
</gene>
<reference key="1">
    <citation type="submission" date="2004-06" db="EMBL/GenBank/DDBJ databases">
        <authorList>
            <consortium name="NIH - Xenopus Gene Collection (XGC) project"/>
        </authorList>
    </citation>
    <scope>NUCLEOTIDE SEQUENCE [LARGE SCALE MRNA]</scope>
    <source>
        <tissue>Ovary</tissue>
    </source>
</reference>
<organism>
    <name type="scientific">Xenopus laevis</name>
    <name type="common">African clawed frog</name>
    <dbReference type="NCBI Taxonomy" id="8355"/>
    <lineage>
        <taxon>Eukaryota</taxon>
        <taxon>Metazoa</taxon>
        <taxon>Chordata</taxon>
        <taxon>Craniata</taxon>
        <taxon>Vertebrata</taxon>
        <taxon>Euteleostomi</taxon>
        <taxon>Amphibia</taxon>
        <taxon>Batrachia</taxon>
        <taxon>Anura</taxon>
        <taxon>Pipoidea</taxon>
        <taxon>Pipidae</taxon>
        <taxon>Xenopodinae</taxon>
        <taxon>Xenopus</taxon>
        <taxon>Xenopus</taxon>
    </lineage>
</organism>
<feature type="chain" id="PRO_0000244754" description="Dual specificity protein phosphatase 22">
    <location>
        <begin position="1"/>
        <end position="209"/>
    </location>
</feature>
<feature type="domain" description="Tyrosine-protein phosphatase" evidence="2">
    <location>
        <begin position="4"/>
        <end position="144"/>
    </location>
</feature>
<feature type="region of interest" description="Disordered" evidence="3">
    <location>
        <begin position="169"/>
        <end position="192"/>
    </location>
</feature>
<feature type="compositionally biased region" description="Polar residues" evidence="3">
    <location>
        <begin position="177"/>
        <end position="190"/>
    </location>
</feature>
<feature type="active site" description="Phosphocysteine intermediate" evidence="2">
    <location>
        <position position="88"/>
    </location>
</feature>
<dbReference type="EC" id="3.1.3.16"/>
<dbReference type="EC" id="3.1.3.48"/>
<dbReference type="EMBL" id="BC072744">
    <property type="protein sequence ID" value="AAH72744.1"/>
    <property type="molecule type" value="mRNA"/>
</dbReference>
<dbReference type="RefSeq" id="NP_001085436.1">
    <property type="nucleotide sequence ID" value="NM_001091967.1"/>
</dbReference>
<dbReference type="SMR" id="Q6GQJ8"/>
<dbReference type="DNASU" id="443862"/>
<dbReference type="GeneID" id="443862"/>
<dbReference type="KEGG" id="xla:443862"/>
<dbReference type="AGR" id="Xenbase:XB-GENE-6077590"/>
<dbReference type="CTD" id="443862"/>
<dbReference type="Xenbase" id="XB-GENE-6077590">
    <property type="gene designation" value="dusp22.S"/>
</dbReference>
<dbReference type="OrthoDB" id="9979246at2759"/>
<dbReference type="Proteomes" id="UP000186698">
    <property type="component" value="Chromosome 6S"/>
</dbReference>
<dbReference type="Bgee" id="443862">
    <property type="expression patterns" value="Expressed in heart and 19 other cell types or tissues"/>
</dbReference>
<dbReference type="GO" id="GO:0005829">
    <property type="term" value="C:cytosol"/>
    <property type="evidence" value="ECO:0000318"/>
    <property type="project" value="GO_Central"/>
</dbReference>
<dbReference type="GO" id="GO:0005634">
    <property type="term" value="C:nucleus"/>
    <property type="evidence" value="ECO:0007669"/>
    <property type="project" value="UniProtKB-SubCell"/>
</dbReference>
<dbReference type="GO" id="GO:0004722">
    <property type="term" value="F:protein serine/threonine phosphatase activity"/>
    <property type="evidence" value="ECO:0007669"/>
    <property type="project" value="UniProtKB-EC"/>
</dbReference>
<dbReference type="GO" id="GO:0004725">
    <property type="term" value="F:protein tyrosine phosphatase activity"/>
    <property type="evidence" value="ECO:0000318"/>
    <property type="project" value="GO_Central"/>
</dbReference>
<dbReference type="GO" id="GO:0007165">
    <property type="term" value="P:signal transduction"/>
    <property type="evidence" value="ECO:0000318"/>
    <property type="project" value="GO_Central"/>
</dbReference>
<dbReference type="CDD" id="cd14581">
    <property type="entry name" value="DUSP22"/>
    <property type="match status" value="1"/>
</dbReference>
<dbReference type="FunFam" id="3.90.190.10:FF:000048">
    <property type="entry name" value="dual specificity protein phosphatase 22 isoform X1"/>
    <property type="match status" value="1"/>
</dbReference>
<dbReference type="Gene3D" id="3.90.190.10">
    <property type="entry name" value="Protein tyrosine phosphatase superfamily"/>
    <property type="match status" value="1"/>
</dbReference>
<dbReference type="InterPro" id="IPR000340">
    <property type="entry name" value="Dual-sp_phosphatase_cat-dom"/>
</dbReference>
<dbReference type="InterPro" id="IPR029021">
    <property type="entry name" value="Prot-tyrosine_phosphatase-like"/>
</dbReference>
<dbReference type="InterPro" id="IPR000387">
    <property type="entry name" value="Tyr_Pase_dom"/>
</dbReference>
<dbReference type="InterPro" id="IPR020422">
    <property type="entry name" value="TYR_PHOSPHATASE_DUAL_dom"/>
</dbReference>
<dbReference type="PANTHER" id="PTHR45948:SF3">
    <property type="entry name" value="DUAL SPECIFICITY PROTEIN PHOSPHATASE 22"/>
    <property type="match status" value="1"/>
</dbReference>
<dbReference type="PANTHER" id="PTHR45948">
    <property type="entry name" value="DUAL SPECIFICITY PROTEIN PHOSPHATASE DDB_G0269404-RELATED"/>
    <property type="match status" value="1"/>
</dbReference>
<dbReference type="Pfam" id="PF00782">
    <property type="entry name" value="DSPc"/>
    <property type="match status" value="1"/>
</dbReference>
<dbReference type="PRINTS" id="PR01908">
    <property type="entry name" value="ADSPHPHTASE"/>
</dbReference>
<dbReference type="SMART" id="SM00195">
    <property type="entry name" value="DSPc"/>
    <property type="match status" value="1"/>
</dbReference>
<dbReference type="SUPFAM" id="SSF52799">
    <property type="entry name" value="(Phosphotyrosine protein) phosphatases II"/>
    <property type="match status" value="1"/>
</dbReference>
<dbReference type="PROSITE" id="PS50056">
    <property type="entry name" value="TYR_PHOSPHATASE_2"/>
    <property type="match status" value="1"/>
</dbReference>
<dbReference type="PROSITE" id="PS50054">
    <property type="entry name" value="TYR_PHOSPHATASE_DUAL"/>
    <property type="match status" value="1"/>
</dbReference>
<accession>Q6GQJ8</accession>
<protein>
    <recommendedName>
        <fullName>Dual specificity protein phosphatase 22</fullName>
        <ecNumber>3.1.3.16</ecNumber>
        <ecNumber>3.1.3.48</ecNumber>
    </recommendedName>
</protein>
<proteinExistence type="evidence at transcript level"/>
<name>DUS22_XENLA</name>
<comment type="function">
    <text evidence="1">Activates the Jnk signaling pathway. Dephosphorylates and deactivates p38 and stress-activated protein kinase/c-Jun N-terminal kinase (SAPK/JNK) (By similarity).</text>
</comment>
<comment type="catalytic activity">
    <reaction>
        <text>O-phospho-L-tyrosyl-[protein] + H2O = L-tyrosyl-[protein] + phosphate</text>
        <dbReference type="Rhea" id="RHEA:10684"/>
        <dbReference type="Rhea" id="RHEA-COMP:10136"/>
        <dbReference type="Rhea" id="RHEA-COMP:20101"/>
        <dbReference type="ChEBI" id="CHEBI:15377"/>
        <dbReference type="ChEBI" id="CHEBI:43474"/>
        <dbReference type="ChEBI" id="CHEBI:46858"/>
        <dbReference type="ChEBI" id="CHEBI:61978"/>
        <dbReference type="EC" id="3.1.3.48"/>
    </reaction>
</comment>
<comment type="catalytic activity">
    <reaction>
        <text>O-phospho-L-seryl-[protein] + H2O = L-seryl-[protein] + phosphate</text>
        <dbReference type="Rhea" id="RHEA:20629"/>
        <dbReference type="Rhea" id="RHEA-COMP:9863"/>
        <dbReference type="Rhea" id="RHEA-COMP:11604"/>
        <dbReference type="ChEBI" id="CHEBI:15377"/>
        <dbReference type="ChEBI" id="CHEBI:29999"/>
        <dbReference type="ChEBI" id="CHEBI:43474"/>
        <dbReference type="ChEBI" id="CHEBI:83421"/>
        <dbReference type="EC" id="3.1.3.16"/>
    </reaction>
</comment>
<comment type="catalytic activity">
    <reaction>
        <text>O-phospho-L-threonyl-[protein] + H2O = L-threonyl-[protein] + phosphate</text>
        <dbReference type="Rhea" id="RHEA:47004"/>
        <dbReference type="Rhea" id="RHEA-COMP:11060"/>
        <dbReference type="Rhea" id="RHEA-COMP:11605"/>
        <dbReference type="ChEBI" id="CHEBI:15377"/>
        <dbReference type="ChEBI" id="CHEBI:30013"/>
        <dbReference type="ChEBI" id="CHEBI:43474"/>
        <dbReference type="ChEBI" id="CHEBI:61977"/>
        <dbReference type="EC" id="3.1.3.16"/>
    </reaction>
</comment>
<comment type="subcellular location">
    <subcellularLocation>
        <location evidence="1">Cytoplasm</location>
    </subcellularLocation>
    <subcellularLocation>
        <location evidence="1">Nucleus</location>
    </subcellularLocation>
</comment>
<comment type="similarity">
    <text evidence="4">Belongs to the protein-tyrosine phosphatase family. Non-receptor class dual specificity subfamily.</text>
</comment>